<keyword id="KW-0030">Aminoacyl-tRNA synthetase</keyword>
<keyword id="KW-0067">ATP-binding</keyword>
<keyword id="KW-0963">Cytoplasm</keyword>
<keyword id="KW-0436">Ligase</keyword>
<keyword id="KW-0460">Magnesium</keyword>
<keyword id="KW-0479">Metal-binding</keyword>
<keyword id="KW-0547">Nucleotide-binding</keyword>
<keyword id="KW-0648">Protein biosynthesis</keyword>
<keyword id="KW-1185">Reference proteome</keyword>
<reference key="1">
    <citation type="journal article" date="2003" name="Proc. Natl. Acad. Sci. U.S.A.">
        <title>Reductive genome evolution in Buchnera aphidicola.</title>
        <authorList>
            <person name="van Ham R.C.H.J."/>
            <person name="Kamerbeek J."/>
            <person name="Palacios C."/>
            <person name="Rausell C."/>
            <person name="Abascal F."/>
            <person name="Bastolla U."/>
            <person name="Fernandez J.M."/>
            <person name="Jimenez L."/>
            <person name="Postigo M."/>
            <person name="Silva F.J."/>
            <person name="Tamames J."/>
            <person name="Viguera E."/>
            <person name="Latorre A."/>
            <person name="Valencia A."/>
            <person name="Moran F."/>
            <person name="Moya A."/>
        </authorList>
    </citation>
    <scope>NUCLEOTIDE SEQUENCE [LARGE SCALE GENOMIC DNA]</scope>
    <source>
        <strain>Bp</strain>
    </source>
</reference>
<organism>
    <name type="scientific">Buchnera aphidicola subsp. Baizongia pistaciae (strain Bp)</name>
    <dbReference type="NCBI Taxonomy" id="224915"/>
    <lineage>
        <taxon>Bacteria</taxon>
        <taxon>Pseudomonadati</taxon>
        <taxon>Pseudomonadota</taxon>
        <taxon>Gammaproteobacteria</taxon>
        <taxon>Enterobacterales</taxon>
        <taxon>Erwiniaceae</taxon>
        <taxon>Buchnera</taxon>
    </lineage>
</organism>
<feature type="chain" id="PRO_0000152607" description="Lysine--tRNA ligase">
    <location>
        <begin position="1"/>
        <end position="500"/>
    </location>
</feature>
<feature type="binding site" evidence="1">
    <location>
        <position position="402"/>
    </location>
    <ligand>
        <name>Mg(2+)</name>
        <dbReference type="ChEBI" id="CHEBI:18420"/>
        <label>1</label>
    </ligand>
</feature>
<feature type="binding site" evidence="1">
    <location>
        <position position="409"/>
    </location>
    <ligand>
        <name>Mg(2+)</name>
        <dbReference type="ChEBI" id="CHEBI:18420"/>
        <label>1</label>
    </ligand>
</feature>
<feature type="binding site" evidence="1">
    <location>
        <position position="409"/>
    </location>
    <ligand>
        <name>Mg(2+)</name>
        <dbReference type="ChEBI" id="CHEBI:18420"/>
        <label>2</label>
    </ligand>
</feature>
<proteinExistence type="inferred from homology"/>
<dbReference type="EC" id="6.1.1.6" evidence="1"/>
<dbReference type="EMBL" id="AE016826">
    <property type="protein sequence ID" value="AAO27101.1"/>
    <property type="molecule type" value="Genomic_DNA"/>
</dbReference>
<dbReference type="RefSeq" id="WP_011091502.1">
    <property type="nucleotide sequence ID" value="NC_004545.1"/>
</dbReference>
<dbReference type="SMR" id="Q89AC5"/>
<dbReference type="STRING" id="224915.bbp_389"/>
<dbReference type="KEGG" id="bab:bbp_389"/>
<dbReference type="eggNOG" id="COG1190">
    <property type="taxonomic scope" value="Bacteria"/>
</dbReference>
<dbReference type="HOGENOM" id="CLU_008255_6_0_6"/>
<dbReference type="OrthoDB" id="9762036at2"/>
<dbReference type="Proteomes" id="UP000000601">
    <property type="component" value="Chromosome"/>
</dbReference>
<dbReference type="GO" id="GO:0005829">
    <property type="term" value="C:cytosol"/>
    <property type="evidence" value="ECO:0007669"/>
    <property type="project" value="TreeGrafter"/>
</dbReference>
<dbReference type="GO" id="GO:0005524">
    <property type="term" value="F:ATP binding"/>
    <property type="evidence" value="ECO:0007669"/>
    <property type="project" value="UniProtKB-UniRule"/>
</dbReference>
<dbReference type="GO" id="GO:0004824">
    <property type="term" value="F:lysine-tRNA ligase activity"/>
    <property type="evidence" value="ECO:0007669"/>
    <property type="project" value="UniProtKB-UniRule"/>
</dbReference>
<dbReference type="GO" id="GO:0000287">
    <property type="term" value="F:magnesium ion binding"/>
    <property type="evidence" value="ECO:0007669"/>
    <property type="project" value="UniProtKB-UniRule"/>
</dbReference>
<dbReference type="GO" id="GO:0000049">
    <property type="term" value="F:tRNA binding"/>
    <property type="evidence" value="ECO:0007669"/>
    <property type="project" value="TreeGrafter"/>
</dbReference>
<dbReference type="GO" id="GO:0006430">
    <property type="term" value="P:lysyl-tRNA aminoacylation"/>
    <property type="evidence" value="ECO:0007669"/>
    <property type="project" value="UniProtKB-UniRule"/>
</dbReference>
<dbReference type="CDD" id="cd00775">
    <property type="entry name" value="LysRS_core"/>
    <property type="match status" value="1"/>
</dbReference>
<dbReference type="CDD" id="cd04322">
    <property type="entry name" value="LysRS_N"/>
    <property type="match status" value="1"/>
</dbReference>
<dbReference type="FunFam" id="2.40.50.140:FF:000024">
    <property type="entry name" value="Lysine--tRNA ligase"/>
    <property type="match status" value="1"/>
</dbReference>
<dbReference type="Gene3D" id="3.30.930.10">
    <property type="entry name" value="Bira Bifunctional Protein, Domain 2"/>
    <property type="match status" value="1"/>
</dbReference>
<dbReference type="Gene3D" id="2.40.50.140">
    <property type="entry name" value="Nucleic acid-binding proteins"/>
    <property type="match status" value="1"/>
</dbReference>
<dbReference type="HAMAP" id="MF_00252">
    <property type="entry name" value="Lys_tRNA_synth_class2"/>
    <property type="match status" value="1"/>
</dbReference>
<dbReference type="InterPro" id="IPR004364">
    <property type="entry name" value="Aa-tRNA-synt_II"/>
</dbReference>
<dbReference type="InterPro" id="IPR006195">
    <property type="entry name" value="aa-tRNA-synth_II"/>
</dbReference>
<dbReference type="InterPro" id="IPR045864">
    <property type="entry name" value="aa-tRNA-synth_II/BPL/LPL"/>
</dbReference>
<dbReference type="InterPro" id="IPR002313">
    <property type="entry name" value="Lys-tRNA-ligase_II"/>
</dbReference>
<dbReference type="InterPro" id="IPR044136">
    <property type="entry name" value="Lys-tRNA-ligase_II_N"/>
</dbReference>
<dbReference type="InterPro" id="IPR018149">
    <property type="entry name" value="Lys-tRNA-synth_II_C"/>
</dbReference>
<dbReference type="InterPro" id="IPR012340">
    <property type="entry name" value="NA-bd_OB-fold"/>
</dbReference>
<dbReference type="InterPro" id="IPR004365">
    <property type="entry name" value="NA-bd_OB_tRNA"/>
</dbReference>
<dbReference type="NCBIfam" id="TIGR00499">
    <property type="entry name" value="lysS_bact"/>
    <property type="match status" value="1"/>
</dbReference>
<dbReference type="NCBIfam" id="NF001756">
    <property type="entry name" value="PRK00484.1"/>
    <property type="match status" value="1"/>
</dbReference>
<dbReference type="PANTHER" id="PTHR42918:SF15">
    <property type="entry name" value="LYSINE--TRNA LIGASE, CHLOROPLASTIC_MITOCHONDRIAL"/>
    <property type="match status" value="1"/>
</dbReference>
<dbReference type="PANTHER" id="PTHR42918">
    <property type="entry name" value="LYSYL-TRNA SYNTHETASE"/>
    <property type="match status" value="1"/>
</dbReference>
<dbReference type="Pfam" id="PF00152">
    <property type="entry name" value="tRNA-synt_2"/>
    <property type="match status" value="1"/>
</dbReference>
<dbReference type="Pfam" id="PF01336">
    <property type="entry name" value="tRNA_anti-codon"/>
    <property type="match status" value="1"/>
</dbReference>
<dbReference type="PRINTS" id="PR00982">
    <property type="entry name" value="TRNASYNTHLYS"/>
</dbReference>
<dbReference type="SUPFAM" id="SSF55681">
    <property type="entry name" value="Class II aaRS and biotin synthetases"/>
    <property type="match status" value="1"/>
</dbReference>
<dbReference type="SUPFAM" id="SSF50249">
    <property type="entry name" value="Nucleic acid-binding proteins"/>
    <property type="match status" value="1"/>
</dbReference>
<dbReference type="PROSITE" id="PS50862">
    <property type="entry name" value="AA_TRNA_LIGASE_II"/>
    <property type="match status" value="1"/>
</dbReference>
<sequence length="500" mass="58482">MLINEEKERREKLNYIKKHGYNFPNDFKPKNNFSDLTQRYKDYTRDQLFSLKICVSVAGRMTNKRIMGKSSFFILKDFEGEIQLYIQENLFALNFYKQFVKKWDLGDILGAKGKLFKTRTGELSIHCTEIKLLTKALKPLPSKFHGLSDQETRYRQRYLDLISNRTLCSIFKIRSLIFINIRKYMLKKKFLEVETPMMQNIPGGASARPFITHHNTLEIDLYLRISPELYLKRLIVGGFNKIFEINKSFRNEGISTRHNPEFTMMEVYMAYSNYHDMMNFTEKLLMFLVKEIVGNSQVKHGTNIIDFKKKFFRCTLKEAILKYNPSIRLSDLNDEVKMNKIVKKLGINVKKKLNAGQLILEIFNKTVEKKLIQPTFILDYPVEVSPLSRRSDVNKNVVDRFELFISGYEIGNGFSELNDADDQKKRFLMQCKLSHNINNLNKISSFDKHILYDSDYITALEYGLPPTSGLGIGIDRLTMLLTNQKSIRDVIFFPILKPSV</sequence>
<comment type="catalytic activity">
    <reaction evidence="1">
        <text>tRNA(Lys) + L-lysine + ATP = L-lysyl-tRNA(Lys) + AMP + diphosphate</text>
        <dbReference type="Rhea" id="RHEA:20792"/>
        <dbReference type="Rhea" id="RHEA-COMP:9696"/>
        <dbReference type="Rhea" id="RHEA-COMP:9697"/>
        <dbReference type="ChEBI" id="CHEBI:30616"/>
        <dbReference type="ChEBI" id="CHEBI:32551"/>
        <dbReference type="ChEBI" id="CHEBI:33019"/>
        <dbReference type="ChEBI" id="CHEBI:78442"/>
        <dbReference type="ChEBI" id="CHEBI:78529"/>
        <dbReference type="ChEBI" id="CHEBI:456215"/>
        <dbReference type="EC" id="6.1.1.6"/>
    </reaction>
</comment>
<comment type="cofactor">
    <cofactor evidence="1">
        <name>Mg(2+)</name>
        <dbReference type="ChEBI" id="CHEBI:18420"/>
    </cofactor>
    <text evidence="1">Binds 3 Mg(2+) ions per subunit.</text>
</comment>
<comment type="subunit">
    <text evidence="1">Homodimer.</text>
</comment>
<comment type="subcellular location">
    <subcellularLocation>
        <location evidence="1">Cytoplasm</location>
    </subcellularLocation>
</comment>
<comment type="similarity">
    <text evidence="1">Belongs to the class-II aminoacyl-tRNA synthetase family.</text>
</comment>
<name>SYK_BUCBP</name>
<protein>
    <recommendedName>
        <fullName evidence="1">Lysine--tRNA ligase</fullName>
        <ecNumber evidence="1">6.1.1.6</ecNumber>
    </recommendedName>
    <alternativeName>
        <fullName evidence="1">Lysyl-tRNA synthetase</fullName>
        <shortName evidence="1">LysRS</shortName>
    </alternativeName>
</protein>
<accession>Q89AC5</accession>
<evidence type="ECO:0000255" key="1">
    <source>
        <dbReference type="HAMAP-Rule" id="MF_00252"/>
    </source>
</evidence>
<gene>
    <name evidence="1" type="primary">lysS</name>
    <name type="ordered locus">bbp_389</name>
</gene>